<organism>
    <name type="scientific">Escherichia coli (strain K12)</name>
    <dbReference type="NCBI Taxonomy" id="83333"/>
    <lineage>
        <taxon>Bacteria</taxon>
        <taxon>Pseudomonadati</taxon>
        <taxon>Pseudomonadota</taxon>
        <taxon>Gammaproteobacteria</taxon>
        <taxon>Enterobacterales</taxon>
        <taxon>Enterobacteriaceae</taxon>
        <taxon>Escherichia</taxon>
    </lineage>
</organism>
<name>YHJX_ECOLI</name>
<comment type="function">
    <text evidence="4">Part of a nutrient-sensing regulatory network composed of the two-component regulatory systems BtsS/BtsR and YpdA/YpdB, and their respective target proteins, BtsT and YhjX.</text>
</comment>
<comment type="subunit">
    <text evidence="4">Interacts with BtsS and YpdA.</text>
</comment>
<comment type="subcellular location">
    <subcellularLocation>
        <location evidence="2 3">Cell inner membrane</location>
        <topology evidence="2 3">Multi-pass membrane protein</topology>
    </subcellularLocation>
</comment>
<comment type="induction">
    <text evidence="3 4">Induced by the two-component regulatory system YpdA/YpdB in response to pyruvate (PubMed:23222720). Regulated at post-transcriptional level by CsrA (PubMed:24659770).</text>
</comment>
<comment type="similarity">
    <text evidence="5">Belongs to the major facilitator superfamily.</text>
</comment>
<keyword id="KW-0997">Cell inner membrane</keyword>
<keyword id="KW-1003">Cell membrane</keyword>
<keyword id="KW-0472">Membrane</keyword>
<keyword id="KW-1185">Reference proteome</keyword>
<keyword id="KW-0812">Transmembrane</keyword>
<keyword id="KW-1133">Transmembrane helix</keyword>
<keyword id="KW-0813">Transport</keyword>
<feature type="chain" id="PRO_0000169585" description="Uncharacterized MFS-type transporter YhjX">
    <location>
        <begin position="1"/>
        <end position="402"/>
    </location>
</feature>
<feature type="topological domain" description="Cytoplasmic" evidence="1">
    <location>
        <begin position="1"/>
        <end position="11"/>
    </location>
</feature>
<feature type="transmembrane region" description="Helical" evidence="1">
    <location>
        <begin position="12"/>
        <end position="34"/>
    </location>
</feature>
<feature type="topological domain" description="Periplasmic" evidence="1">
    <location>
        <begin position="35"/>
        <end position="43"/>
    </location>
</feature>
<feature type="transmembrane region" description="Helical" evidence="1">
    <location>
        <begin position="44"/>
        <end position="66"/>
    </location>
</feature>
<feature type="topological domain" description="Cytoplasmic" evidence="1">
    <location>
        <begin position="67"/>
        <end position="72"/>
    </location>
</feature>
<feature type="transmembrane region" description="Helical" evidence="1">
    <location>
        <begin position="73"/>
        <end position="95"/>
    </location>
</feature>
<feature type="topological domain" description="Periplasmic" evidence="1">
    <location>
        <begin position="96"/>
        <end position="99"/>
    </location>
</feature>
<feature type="transmembrane region" description="Helical" evidence="1">
    <location>
        <begin position="100"/>
        <end position="122"/>
    </location>
</feature>
<feature type="topological domain" description="Cytoplasmic" evidence="1">
    <location>
        <begin position="123"/>
        <end position="134"/>
    </location>
</feature>
<feature type="transmembrane region" description="Helical" evidence="1">
    <location>
        <begin position="135"/>
        <end position="154"/>
    </location>
</feature>
<feature type="topological domain" description="Periplasmic" evidence="1">
    <location>
        <begin position="155"/>
        <end position="168"/>
    </location>
</feature>
<feature type="transmembrane region" description="Helical" evidence="1">
    <location>
        <begin position="169"/>
        <end position="186"/>
    </location>
</feature>
<feature type="topological domain" description="Cytoplasmic" evidence="1">
    <location>
        <begin position="187"/>
        <end position="216"/>
    </location>
</feature>
<feature type="transmembrane region" description="Helical" evidence="1">
    <location>
        <begin position="217"/>
        <end position="236"/>
    </location>
</feature>
<feature type="topological domain" description="Periplasmic" evidence="1">
    <location>
        <begin position="237"/>
        <end position="250"/>
    </location>
</feature>
<feature type="transmembrane region" description="Helical" evidence="1">
    <location>
        <begin position="251"/>
        <end position="273"/>
    </location>
</feature>
<feature type="topological domain" description="Cytoplasmic" evidence="1">
    <location>
        <begin position="274"/>
        <end position="279"/>
    </location>
</feature>
<feature type="transmembrane region" description="Helical" evidence="1">
    <location>
        <begin position="280"/>
        <end position="302"/>
    </location>
</feature>
<feature type="topological domain" description="Periplasmic" evidence="1">
    <location>
        <begin position="303"/>
        <end position="306"/>
    </location>
</feature>
<feature type="transmembrane region" description="Helical" evidence="1">
    <location>
        <begin position="307"/>
        <end position="329"/>
    </location>
</feature>
<feature type="topological domain" description="Cytoplasmic" evidence="1">
    <location>
        <begin position="330"/>
        <end position="341"/>
    </location>
</feature>
<feature type="transmembrane region" description="Helical" evidence="1">
    <location>
        <begin position="342"/>
        <end position="364"/>
    </location>
</feature>
<feature type="topological domain" description="Periplasmic" evidence="1">
    <location>
        <begin position="365"/>
        <end position="367"/>
    </location>
</feature>
<feature type="transmembrane region" description="Helical" evidence="1">
    <location>
        <begin position="368"/>
        <end position="387"/>
    </location>
</feature>
<feature type="topological domain" description="Cytoplasmic" evidence="1">
    <location>
        <begin position="388"/>
        <end position="402"/>
    </location>
</feature>
<gene>
    <name type="primary">yhjX</name>
    <name type="ordered locus">b3547</name>
    <name type="ordered locus">JW3516</name>
</gene>
<evidence type="ECO:0000255" key="1"/>
<evidence type="ECO:0000269" key="2">
    <source>
    </source>
</evidence>
<evidence type="ECO:0000269" key="3">
    <source>
    </source>
</evidence>
<evidence type="ECO:0000269" key="4">
    <source>
    </source>
</evidence>
<evidence type="ECO:0000305" key="5"/>
<proteinExistence type="evidence at protein level"/>
<accession>P37662</accession>
<accession>Q2M7K8</accession>
<reference key="1">
    <citation type="journal article" date="1994" name="Nucleic Acids Res.">
        <title>Analysis of the Escherichia coli genome. V. DNA sequence of the region from 76.0 to 81.5 minutes.</title>
        <authorList>
            <person name="Sofia H.J."/>
            <person name="Burland V."/>
            <person name="Daniels D.L."/>
            <person name="Plunkett G. III"/>
            <person name="Blattner F.R."/>
        </authorList>
    </citation>
    <scope>NUCLEOTIDE SEQUENCE [LARGE SCALE GENOMIC DNA]</scope>
    <source>
        <strain>K12 / MG1655 / ATCC 47076</strain>
    </source>
</reference>
<reference key="2">
    <citation type="journal article" date="1997" name="Science">
        <title>The complete genome sequence of Escherichia coli K-12.</title>
        <authorList>
            <person name="Blattner F.R."/>
            <person name="Plunkett G. III"/>
            <person name="Bloch C.A."/>
            <person name="Perna N.T."/>
            <person name="Burland V."/>
            <person name="Riley M."/>
            <person name="Collado-Vides J."/>
            <person name="Glasner J.D."/>
            <person name="Rode C.K."/>
            <person name="Mayhew G.F."/>
            <person name="Gregor J."/>
            <person name="Davis N.W."/>
            <person name="Kirkpatrick H.A."/>
            <person name="Goeden M.A."/>
            <person name="Rose D.J."/>
            <person name="Mau B."/>
            <person name="Shao Y."/>
        </authorList>
    </citation>
    <scope>NUCLEOTIDE SEQUENCE [LARGE SCALE GENOMIC DNA]</scope>
    <source>
        <strain>K12 / MG1655 / ATCC 47076</strain>
    </source>
</reference>
<reference key="3">
    <citation type="journal article" date="2006" name="Mol. Syst. Biol.">
        <title>Highly accurate genome sequences of Escherichia coli K-12 strains MG1655 and W3110.</title>
        <authorList>
            <person name="Hayashi K."/>
            <person name="Morooka N."/>
            <person name="Yamamoto Y."/>
            <person name="Fujita K."/>
            <person name="Isono K."/>
            <person name="Choi S."/>
            <person name="Ohtsubo E."/>
            <person name="Baba T."/>
            <person name="Wanner B.L."/>
            <person name="Mori H."/>
            <person name="Horiuchi T."/>
        </authorList>
    </citation>
    <scope>NUCLEOTIDE SEQUENCE [LARGE SCALE GENOMIC DNA]</scope>
    <source>
        <strain>K12 / W3110 / ATCC 27325 / DSM 5911</strain>
    </source>
</reference>
<reference key="4">
    <citation type="journal article" date="2005" name="Science">
        <title>Global topology analysis of the Escherichia coli inner membrane proteome.</title>
        <authorList>
            <person name="Daley D.O."/>
            <person name="Rapp M."/>
            <person name="Granseth E."/>
            <person name="Melen K."/>
            <person name="Drew D."/>
            <person name="von Heijne G."/>
        </authorList>
    </citation>
    <scope>SUBCELLULAR LOCATION</scope>
    <scope>TOPOLOGY [LARGE SCALE ANALYSIS]</scope>
    <source>
        <strain>K12 / MG1655 / ATCC 47076</strain>
    </source>
</reference>
<reference key="5">
    <citation type="journal article" date="2013" name="J. Bacteriol.">
        <title>Identification of a target gene and activating stimulus for the YpdA/YpdB histidine kinase/response regulator system in Escherichia coli.</title>
        <authorList>
            <person name="Fried L."/>
            <person name="Behr S."/>
            <person name="Jung K."/>
        </authorList>
    </citation>
    <scope>SUBCELLULAR LOCATION</scope>
    <scope>INDUCTION</scope>
    <source>
        <strain>K12 / MG1655 / ATCC 47076</strain>
    </source>
</reference>
<reference key="6">
    <citation type="journal article" date="2014" name="J. Bacteriol.">
        <title>Identification of a novel nutrient-sensing histidine kinase/response regulator network in Escherichia coli.</title>
        <authorList>
            <person name="Behr S."/>
            <person name="Fried L."/>
            <person name="Jung K."/>
        </authorList>
    </citation>
    <scope>FUNCTION</scope>
    <scope>INTERACTION WITH BTSS AND YPDA</scope>
    <scope>INDUCTION</scope>
    <source>
        <strain>K12 / MG1655 / ATCC 47076</strain>
    </source>
</reference>
<protein>
    <recommendedName>
        <fullName evidence="5">Uncharacterized MFS-type transporter YhjX</fullName>
    </recommendedName>
</protein>
<dbReference type="EMBL" id="U00039">
    <property type="protein sequence ID" value="AAB18524.1"/>
    <property type="molecule type" value="Genomic_DNA"/>
</dbReference>
<dbReference type="EMBL" id="U00096">
    <property type="protein sequence ID" value="AAC76571.1"/>
    <property type="molecule type" value="Genomic_DNA"/>
</dbReference>
<dbReference type="EMBL" id="AP009048">
    <property type="protein sequence ID" value="BAE77748.1"/>
    <property type="molecule type" value="Genomic_DNA"/>
</dbReference>
<dbReference type="PIR" id="S47768">
    <property type="entry name" value="S47768"/>
</dbReference>
<dbReference type="RefSeq" id="NP_418003.1">
    <property type="nucleotide sequence ID" value="NC_000913.3"/>
</dbReference>
<dbReference type="RefSeq" id="WP_000189019.1">
    <property type="nucleotide sequence ID" value="NZ_SSZK01000068.1"/>
</dbReference>
<dbReference type="SMR" id="P37662"/>
<dbReference type="BioGRID" id="4260694">
    <property type="interactions" value="169"/>
</dbReference>
<dbReference type="DIP" id="DIP-12395N"/>
<dbReference type="FunCoup" id="P37662">
    <property type="interactions" value="637"/>
</dbReference>
<dbReference type="IntAct" id="P37662">
    <property type="interactions" value="1"/>
</dbReference>
<dbReference type="STRING" id="511145.b3547"/>
<dbReference type="TCDB" id="2.A.1.11.3">
    <property type="family name" value="the major facilitator superfamily (mfs)"/>
</dbReference>
<dbReference type="PaxDb" id="511145-b3547"/>
<dbReference type="EnsemblBacteria" id="AAC76571">
    <property type="protein sequence ID" value="AAC76571"/>
    <property type="gene ID" value="b3547"/>
</dbReference>
<dbReference type="GeneID" id="948066"/>
<dbReference type="KEGG" id="ecj:JW3516"/>
<dbReference type="KEGG" id="eco:b3547"/>
<dbReference type="KEGG" id="ecoc:C3026_19230"/>
<dbReference type="PATRIC" id="fig|1411691.4.peg.3167"/>
<dbReference type="EchoBASE" id="EB2177"/>
<dbReference type="eggNOG" id="COG2223">
    <property type="taxonomic scope" value="Bacteria"/>
</dbReference>
<dbReference type="HOGENOM" id="CLU_001265_59_7_6"/>
<dbReference type="InParanoid" id="P37662"/>
<dbReference type="OMA" id="WVLASHQ"/>
<dbReference type="OrthoDB" id="9793415at2"/>
<dbReference type="PhylomeDB" id="P37662"/>
<dbReference type="BioCyc" id="EcoCyc:YHJX-MONOMER"/>
<dbReference type="PRO" id="PR:P37662"/>
<dbReference type="Proteomes" id="UP000000625">
    <property type="component" value="Chromosome"/>
</dbReference>
<dbReference type="GO" id="GO:0005886">
    <property type="term" value="C:plasma membrane"/>
    <property type="evidence" value="ECO:0000314"/>
    <property type="project" value="EcoCyc"/>
</dbReference>
<dbReference type="GO" id="GO:0022857">
    <property type="term" value="F:transmembrane transporter activity"/>
    <property type="evidence" value="ECO:0000318"/>
    <property type="project" value="GO_Central"/>
</dbReference>
<dbReference type="GO" id="GO:0031669">
    <property type="term" value="P:cellular response to nutrient levels"/>
    <property type="evidence" value="ECO:0000270"/>
    <property type="project" value="EcoCyc"/>
</dbReference>
<dbReference type="CDD" id="cd17353">
    <property type="entry name" value="MFS_OFA_like"/>
    <property type="match status" value="1"/>
</dbReference>
<dbReference type="FunFam" id="1.20.1250.20:FF:000166">
    <property type="entry name" value="Inner membrane protein YhjX"/>
    <property type="match status" value="1"/>
</dbReference>
<dbReference type="FunFam" id="1.20.1250.20:FF:000194">
    <property type="entry name" value="Inner membrane protein yhjX"/>
    <property type="match status" value="1"/>
</dbReference>
<dbReference type="Gene3D" id="1.20.1250.20">
    <property type="entry name" value="MFS general substrate transporter like domains"/>
    <property type="match status" value="2"/>
</dbReference>
<dbReference type="InterPro" id="IPR011701">
    <property type="entry name" value="MFS"/>
</dbReference>
<dbReference type="InterPro" id="IPR020846">
    <property type="entry name" value="MFS_dom"/>
</dbReference>
<dbReference type="InterPro" id="IPR036259">
    <property type="entry name" value="MFS_trans_sf"/>
</dbReference>
<dbReference type="InterPro" id="IPR004741">
    <property type="entry name" value="Oxa_For_antiport_fam_transptr"/>
</dbReference>
<dbReference type="InterPro" id="IPR050327">
    <property type="entry name" value="Proton-linked_MCT"/>
</dbReference>
<dbReference type="NCBIfam" id="TIGR00890">
    <property type="entry name" value="2A0111"/>
    <property type="match status" value="1"/>
</dbReference>
<dbReference type="PANTHER" id="PTHR11360:SF317">
    <property type="entry name" value="MAJOR FACILITATOR SUPERFAMILY (MFS) PROFILE DOMAIN-CONTAINING PROTEIN-RELATED"/>
    <property type="match status" value="1"/>
</dbReference>
<dbReference type="PANTHER" id="PTHR11360">
    <property type="entry name" value="MONOCARBOXYLATE TRANSPORTER"/>
    <property type="match status" value="1"/>
</dbReference>
<dbReference type="Pfam" id="PF07690">
    <property type="entry name" value="MFS_1"/>
    <property type="match status" value="2"/>
</dbReference>
<dbReference type="SUPFAM" id="SSF103473">
    <property type="entry name" value="MFS general substrate transporter"/>
    <property type="match status" value="1"/>
</dbReference>
<dbReference type="PROSITE" id="PS50850">
    <property type="entry name" value="MFS"/>
    <property type="match status" value="1"/>
</dbReference>
<sequence length="402" mass="42951">MTPSNYQRTRWLTLIGTIITQFALGSVYTWSLFNGALSAKLDAPVSQVAFSFGLLSLGLAISSSVAGKLQERFGVKRVTMASGILLGLGFFLTAHSDNLMMLWLSAGVLVGLADGAGYLLTLSNCVKWFPERKGLISAFAIGSYGLGSLGFKFIDTQLLETVGLEKTFVIWGAIALLMIVFGATLMKDAPKQEVKTSNGVVEKDYTLAESMRKPQYWMLAVMFLTACMSGLYVIGVAKDIAQSLAHLDVVSAANAVTVISIANLSGRLVLGILSDKIARIRVITIGQVISLVGMAALLFAPLNAVTFFAAIACVAFNFGGTITVFPSLVSEFFGLNNLAKNYGVIYLGFGIGSICGSIIASLFGGFYVTFYVIFALLILSLALSTTIRQPEQKMLREAHGSL</sequence>